<name>EMC4_YEAST</name>
<sequence>MSEQEPYEWAKHLLDTKYIEKYNIQNSNTLPSPPGFEGNSSKGNVTRKQQDATSQTTSLAQKNQITVLQVQKAWQIALQPAKSIPMNIFMSYMSGTSLQIIPIMTALMLLSGPIKAIFSTRSAFKPVLGNKATQSQVQTAMFMYIVFQGVLMYIGYRKLNSMGLIPNAKGDWLPWERIAHYNNGLQWFSD</sequence>
<dbReference type="EMBL" id="Z72753">
    <property type="protein sequence ID" value="CAA96949.1"/>
    <property type="molecule type" value="Genomic_DNA"/>
</dbReference>
<dbReference type="EMBL" id="AY558267">
    <property type="protein sequence ID" value="AAS56593.1"/>
    <property type="molecule type" value="Genomic_DNA"/>
</dbReference>
<dbReference type="EMBL" id="BK006941">
    <property type="protein sequence ID" value="DAA07887.1"/>
    <property type="molecule type" value="Genomic_DNA"/>
</dbReference>
<dbReference type="PIR" id="S64253">
    <property type="entry name" value="S64253"/>
</dbReference>
<dbReference type="RefSeq" id="NP_011283.1">
    <property type="nucleotide sequence ID" value="NM_001181097.1"/>
</dbReference>
<dbReference type="PDB" id="6WB9">
    <property type="method" value="EM"/>
    <property type="resolution" value="3.00 A"/>
    <property type="chains" value="4=1-190"/>
</dbReference>
<dbReference type="PDB" id="7KRA">
    <property type="method" value="EM"/>
    <property type="resolution" value="3.20 A"/>
    <property type="chains" value="D=1-190"/>
</dbReference>
<dbReference type="PDB" id="7KTX">
    <property type="method" value="EM"/>
    <property type="resolution" value="4.30 A"/>
    <property type="chains" value="D=1-190"/>
</dbReference>
<dbReference type="PDBsum" id="6WB9"/>
<dbReference type="PDBsum" id="7KRA"/>
<dbReference type="PDBsum" id="7KTX"/>
<dbReference type="EMDB" id="EMD-21587"/>
<dbReference type="EMDB" id="EMD-23003"/>
<dbReference type="EMDB" id="EMD-23033"/>
<dbReference type="SMR" id="P53073"/>
<dbReference type="BioGRID" id="33008">
    <property type="interactions" value="121"/>
</dbReference>
<dbReference type="ComplexPortal" id="CPX-307">
    <property type="entry name" value="Endoplasmic Reticulum Membrane Complex"/>
</dbReference>
<dbReference type="DIP" id="DIP-7920N"/>
<dbReference type="FunCoup" id="P53073">
    <property type="interactions" value="856"/>
</dbReference>
<dbReference type="IntAct" id="P53073">
    <property type="interactions" value="9"/>
</dbReference>
<dbReference type="STRING" id="4932.YGL231C"/>
<dbReference type="TCDB" id="3.A.27.1.2">
    <property type="family name" value="the endoplasmic reticulum membrane protein insertion complex (emc) family"/>
</dbReference>
<dbReference type="iPTMnet" id="P53073"/>
<dbReference type="PaxDb" id="4932-YGL231C"/>
<dbReference type="PeptideAtlas" id="P53073"/>
<dbReference type="EnsemblFungi" id="YGL231C_mRNA">
    <property type="protein sequence ID" value="YGL231C"/>
    <property type="gene ID" value="YGL231C"/>
</dbReference>
<dbReference type="GeneID" id="852620"/>
<dbReference type="KEGG" id="sce:YGL231C"/>
<dbReference type="AGR" id="SGD:S000003200"/>
<dbReference type="SGD" id="S000003200">
    <property type="gene designation" value="EMC4"/>
</dbReference>
<dbReference type="VEuPathDB" id="FungiDB:YGL231C"/>
<dbReference type="eggNOG" id="KOG3318">
    <property type="taxonomic scope" value="Eukaryota"/>
</dbReference>
<dbReference type="GeneTree" id="ENSGT00390000006970"/>
<dbReference type="HOGENOM" id="CLU_098404_1_3_1"/>
<dbReference type="InParanoid" id="P53073"/>
<dbReference type="OMA" id="QQTFKVI"/>
<dbReference type="OrthoDB" id="369569at2759"/>
<dbReference type="BioCyc" id="YEAST:G3O-30705-MONOMER"/>
<dbReference type="BioGRID-ORCS" id="852620">
    <property type="hits" value="0 hits in 10 CRISPR screens"/>
</dbReference>
<dbReference type="PRO" id="PR:P53073"/>
<dbReference type="Proteomes" id="UP000002311">
    <property type="component" value="Chromosome VII"/>
</dbReference>
<dbReference type="RNAct" id="P53073">
    <property type="molecule type" value="protein"/>
</dbReference>
<dbReference type="GO" id="GO:0072546">
    <property type="term" value="C:EMC complex"/>
    <property type="evidence" value="ECO:0000314"/>
    <property type="project" value="UniProtKB"/>
</dbReference>
<dbReference type="GO" id="GO:0005783">
    <property type="term" value="C:endoplasmic reticulum"/>
    <property type="evidence" value="ECO:0007005"/>
    <property type="project" value="SGD"/>
</dbReference>
<dbReference type="GO" id="GO:0006644">
    <property type="term" value="P:phospholipid metabolic process"/>
    <property type="evidence" value="ECO:0000314"/>
    <property type="project" value="ComplexPortal"/>
</dbReference>
<dbReference type="GO" id="GO:0015914">
    <property type="term" value="P:phospholipid transport"/>
    <property type="evidence" value="ECO:0000315"/>
    <property type="project" value="ComplexPortal"/>
</dbReference>
<dbReference type="GO" id="GO:0034975">
    <property type="term" value="P:protein folding in endoplasmic reticulum"/>
    <property type="evidence" value="ECO:0007003"/>
    <property type="project" value="SGD"/>
</dbReference>
<dbReference type="GO" id="GO:0045050">
    <property type="term" value="P:protein insertion into ER membrane by stop-transfer membrane-anchor sequence"/>
    <property type="evidence" value="ECO:0000315"/>
    <property type="project" value="UniProtKB"/>
</dbReference>
<dbReference type="InterPro" id="IPR009445">
    <property type="entry name" value="TMEM85/Emc4"/>
</dbReference>
<dbReference type="PANTHER" id="PTHR19315">
    <property type="entry name" value="ER MEMBRANE PROTEIN COMPLEX SUBUNIT 4"/>
    <property type="match status" value="1"/>
</dbReference>
<dbReference type="Pfam" id="PF06417">
    <property type="entry name" value="EMC4"/>
    <property type="match status" value="1"/>
</dbReference>
<dbReference type="PIRSF" id="PIRSF017207">
    <property type="entry name" value="UCP017207_TM-p85"/>
    <property type="match status" value="1"/>
</dbReference>
<accession>P53073</accession>
<accession>D6VVA3</accession>
<organism>
    <name type="scientific">Saccharomyces cerevisiae (strain ATCC 204508 / S288c)</name>
    <name type="common">Baker's yeast</name>
    <dbReference type="NCBI Taxonomy" id="559292"/>
    <lineage>
        <taxon>Eukaryota</taxon>
        <taxon>Fungi</taxon>
        <taxon>Dikarya</taxon>
        <taxon>Ascomycota</taxon>
        <taxon>Saccharomycotina</taxon>
        <taxon>Saccharomycetes</taxon>
        <taxon>Saccharomycetales</taxon>
        <taxon>Saccharomycetaceae</taxon>
        <taxon>Saccharomyces</taxon>
    </lineage>
</organism>
<protein>
    <recommendedName>
        <fullName>ER membrane protein complex subunit 4</fullName>
    </recommendedName>
</protein>
<reference key="1">
    <citation type="journal article" date="1997" name="Nature">
        <title>The nucleotide sequence of Saccharomyces cerevisiae chromosome VII.</title>
        <authorList>
            <person name="Tettelin H."/>
            <person name="Agostoni-Carbone M.L."/>
            <person name="Albermann K."/>
            <person name="Albers M."/>
            <person name="Arroyo J."/>
            <person name="Backes U."/>
            <person name="Barreiros T."/>
            <person name="Bertani I."/>
            <person name="Bjourson A.J."/>
            <person name="Brueckner M."/>
            <person name="Bruschi C.V."/>
            <person name="Carignani G."/>
            <person name="Castagnoli L."/>
            <person name="Cerdan E."/>
            <person name="Clemente M.L."/>
            <person name="Coblenz A."/>
            <person name="Coglievina M."/>
            <person name="Coissac E."/>
            <person name="Defoor E."/>
            <person name="Del Bino S."/>
            <person name="Delius H."/>
            <person name="Delneri D."/>
            <person name="de Wergifosse P."/>
            <person name="Dujon B."/>
            <person name="Durand P."/>
            <person name="Entian K.-D."/>
            <person name="Eraso P."/>
            <person name="Escribano V."/>
            <person name="Fabiani L."/>
            <person name="Fartmann B."/>
            <person name="Feroli F."/>
            <person name="Feuermann M."/>
            <person name="Frontali L."/>
            <person name="Garcia-Gonzalez M."/>
            <person name="Garcia-Saez M.I."/>
            <person name="Goffeau A."/>
            <person name="Guerreiro P."/>
            <person name="Hani J."/>
            <person name="Hansen M."/>
            <person name="Hebling U."/>
            <person name="Hernandez K."/>
            <person name="Heumann K."/>
            <person name="Hilger F."/>
            <person name="Hofmann B."/>
            <person name="Indge K.J."/>
            <person name="James C.M."/>
            <person name="Klima R."/>
            <person name="Koetter P."/>
            <person name="Kramer B."/>
            <person name="Kramer W."/>
            <person name="Lauquin G."/>
            <person name="Leuther H."/>
            <person name="Louis E.J."/>
            <person name="Maillier E."/>
            <person name="Marconi A."/>
            <person name="Martegani E."/>
            <person name="Mazon M.J."/>
            <person name="Mazzoni C."/>
            <person name="McReynolds A.D.K."/>
            <person name="Melchioretto P."/>
            <person name="Mewes H.-W."/>
            <person name="Minenkova O."/>
            <person name="Mueller-Auer S."/>
            <person name="Nawrocki A."/>
            <person name="Netter P."/>
            <person name="Neu R."/>
            <person name="Nombela C."/>
            <person name="Oliver S.G."/>
            <person name="Panzeri L."/>
            <person name="Paoluzi S."/>
            <person name="Plevani P."/>
            <person name="Portetelle D."/>
            <person name="Portillo F."/>
            <person name="Potier S."/>
            <person name="Purnelle B."/>
            <person name="Rieger M."/>
            <person name="Riles L."/>
            <person name="Rinaldi T."/>
            <person name="Robben J."/>
            <person name="Rodrigues-Pousada C."/>
            <person name="Rodriguez-Belmonte E."/>
            <person name="Rodriguez-Torres A.M."/>
            <person name="Rose M."/>
            <person name="Ruzzi M."/>
            <person name="Saliola M."/>
            <person name="Sanchez-Perez M."/>
            <person name="Schaefer B."/>
            <person name="Schaefer M."/>
            <person name="Scharfe M."/>
            <person name="Schmidheini T."/>
            <person name="Schreer A."/>
            <person name="Skala J."/>
            <person name="Souciet J.-L."/>
            <person name="Steensma H.Y."/>
            <person name="Talla E."/>
            <person name="Thierry A."/>
            <person name="Vandenbol M."/>
            <person name="van der Aart Q.J.M."/>
            <person name="Van Dyck L."/>
            <person name="Vanoni M."/>
            <person name="Verhasselt P."/>
            <person name="Voet M."/>
            <person name="Volckaert G."/>
            <person name="Wambutt R."/>
            <person name="Watson M.D."/>
            <person name="Weber N."/>
            <person name="Wedler E."/>
            <person name="Wedler H."/>
            <person name="Wipfli P."/>
            <person name="Wolf K."/>
            <person name="Wright L.F."/>
            <person name="Zaccaria P."/>
            <person name="Zimmermann M."/>
            <person name="Zollner A."/>
            <person name="Kleine K."/>
        </authorList>
    </citation>
    <scope>NUCLEOTIDE SEQUENCE [LARGE SCALE GENOMIC DNA]</scope>
    <source>
        <strain>ATCC 204508 / S288c</strain>
    </source>
</reference>
<reference key="2">
    <citation type="journal article" date="2014" name="G3 (Bethesda)">
        <title>The reference genome sequence of Saccharomyces cerevisiae: Then and now.</title>
        <authorList>
            <person name="Engel S.R."/>
            <person name="Dietrich F.S."/>
            <person name="Fisk D.G."/>
            <person name="Binkley G."/>
            <person name="Balakrishnan R."/>
            <person name="Costanzo M.C."/>
            <person name="Dwight S.S."/>
            <person name="Hitz B.C."/>
            <person name="Karra K."/>
            <person name="Nash R.S."/>
            <person name="Weng S."/>
            <person name="Wong E.D."/>
            <person name="Lloyd P."/>
            <person name="Skrzypek M.S."/>
            <person name="Miyasato S.R."/>
            <person name="Simison M."/>
            <person name="Cherry J.M."/>
        </authorList>
    </citation>
    <scope>GENOME REANNOTATION</scope>
    <source>
        <strain>ATCC 204508 / S288c</strain>
    </source>
</reference>
<reference key="3">
    <citation type="journal article" date="2007" name="Genome Res.">
        <title>Approaching a complete repository of sequence-verified protein-encoding clones for Saccharomyces cerevisiae.</title>
        <authorList>
            <person name="Hu Y."/>
            <person name="Rolfs A."/>
            <person name="Bhullar B."/>
            <person name="Murthy T.V.S."/>
            <person name="Zhu C."/>
            <person name="Berger M.F."/>
            <person name="Camargo A.A."/>
            <person name="Kelley F."/>
            <person name="McCarron S."/>
            <person name="Jepson D."/>
            <person name="Richardson A."/>
            <person name="Raphael J."/>
            <person name="Moreira D."/>
            <person name="Taycher E."/>
            <person name="Zuo D."/>
            <person name="Mohr S."/>
            <person name="Kane M.F."/>
            <person name="Williamson J."/>
            <person name="Simpson A.J.G."/>
            <person name="Bulyk M.L."/>
            <person name="Harlow E."/>
            <person name="Marsischky G."/>
            <person name="Kolodner R.D."/>
            <person name="LaBaer J."/>
        </authorList>
    </citation>
    <scope>NUCLEOTIDE SEQUENCE [GENOMIC DNA]</scope>
    <source>
        <strain>ATCC 204508 / S288c</strain>
    </source>
</reference>
<reference key="4">
    <citation type="journal article" date="2003" name="Nature">
        <title>Global analysis of protein localization in budding yeast.</title>
        <authorList>
            <person name="Huh W.-K."/>
            <person name="Falvo J.V."/>
            <person name="Gerke L.C."/>
            <person name="Carroll A.S."/>
            <person name="Howson R.W."/>
            <person name="Weissman J.S."/>
            <person name="O'Shea E.K."/>
        </authorList>
    </citation>
    <scope>SUBCELLULAR LOCATION [LARGE SCALE ANALYSIS]</scope>
</reference>
<reference key="5">
    <citation type="journal article" date="2003" name="Nature">
        <title>Global analysis of protein expression in yeast.</title>
        <authorList>
            <person name="Ghaemmaghami S."/>
            <person name="Huh W.-K."/>
            <person name="Bower K."/>
            <person name="Howson R.W."/>
            <person name="Belle A."/>
            <person name="Dephoure N."/>
            <person name="O'Shea E.K."/>
            <person name="Weissman J.S."/>
        </authorList>
    </citation>
    <scope>LEVEL OF PROTEIN EXPRESSION [LARGE SCALE ANALYSIS]</scope>
</reference>
<reference key="6">
    <citation type="journal article" date="2009" name="Science">
        <title>Comprehensive characterization of genes required for protein folding in the endoplasmic reticulum.</title>
        <authorList>
            <person name="Jonikas M.C."/>
            <person name="Collins S.R."/>
            <person name="Denic V."/>
            <person name="Oh E."/>
            <person name="Quan E.M."/>
            <person name="Schmid V."/>
            <person name="Weibezahn J."/>
            <person name="Schwappach B."/>
            <person name="Walter P."/>
            <person name="Weissman J.S."/>
            <person name="Schuldiner M."/>
        </authorList>
    </citation>
    <scope>IDENTIFICATION IN EMC COMPLEX</scope>
</reference>
<reference key="7">
    <citation type="journal article" date="2018" name="Elife">
        <title>The ER membrane protein complex interacts cotranslationally to enable biogenesis of multipass membrane proteins.</title>
        <authorList>
            <person name="Shurtleff M.J."/>
            <person name="Itzhak D.N."/>
            <person name="Hussmann J.A."/>
            <person name="Schirle Oakdale N.T."/>
            <person name="Costa E.A."/>
            <person name="Jonikas M."/>
            <person name="Weibezahn J."/>
            <person name="Popova K.D."/>
            <person name="Jan C.H."/>
            <person name="Sinitcyn P."/>
            <person name="Vembar S.S."/>
            <person name="Hernandez H."/>
            <person name="Cox J."/>
            <person name="Burlingame A.L."/>
            <person name="Brodsky J.L."/>
            <person name="Frost A."/>
            <person name="Borner G.H."/>
            <person name="Weissman J.S."/>
        </authorList>
    </citation>
    <scope>FUNCTION</scope>
    <scope>SUBUNIT</scope>
</reference>
<gene>
    <name type="primary">EMC4</name>
    <name type="ordered locus">YGL231C</name>
</gene>
<comment type="function">
    <text evidence="1 7">Part of the endoplasmic reticulum membrane protein complex (EMC) that enables the energy-independent insertion into endoplasmic reticulum membranes of newly synthesized membrane proteins (PubMed:29809151). Preferentially accommodates proteins with transmembrane domains that are weakly hydrophobic or contain destabilizing features such as charged and aromatic residues (PubMed:29809151). Involved in the cotranslational insertion of multi-pass membrane proteins in which stop-transfer membrane-anchor sequences become ER membrane spanning helices (PubMed:29809151). It is also required for the post-translational insertion of tail-anchored/TA proteins in endoplasmic reticulum membranes. By mediating the proper cotranslational insertion of N-terminal transmembrane domains in an N-exo topology, with translocated N-terminus in the lumen of the ER, controls the topology of multi-pass membrane proteins (By similarity).</text>
</comment>
<comment type="subunit">
    <text evidence="6 7">Component of the ER membrane protein complex (EMC), which is composed of EMC1, EMC2, EMC3, EMC4, EMC5 and EMC6.</text>
</comment>
<comment type="subcellular location">
    <subcellularLocation>
        <location evidence="4">Endoplasmic reticulum membrane</location>
        <topology evidence="4">Multi-pass membrane protein</topology>
    </subcellularLocation>
</comment>
<comment type="miscellaneous">
    <text evidence="5">Present with 1320 molecules/cell in log phase SD medium.</text>
</comment>
<comment type="similarity">
    <text evidence="8">Belongs to the EMC4 family.</text>
</comment>
<keyword id="KW-0002">3D-structure</keyword>
<keyword id="KW-0256">Endoplasmic reticulum</keyword>
<keyword id="KW-0472">Membrane</keyword>
<keyword id="KW-1185">Reference proteome</keyword>
<keyword id="KW-0812">Transmembrane</keyword>
<keyword id="KW-1133">Transmembrane helix</keyword>
<proteinExistence type="evidence at protein level"/>
<feature type="chain" id="PRO_0000202711" description="ER membrane protein complex subunit 4">
    <location>
        <begin position="1"/>
        <end position="190"/>
    </location>
</feature>
<feature type="transmembrane region" description="Helical" evidence="2">
    <location>
        <begin position="98"/>
        <end position="118"/>
    </location>
</feature>
<feature type="transmembrane region" description="Helical" evidence="2">
    <location>
        <begin position="136"/>
        <end position="156"/>
    </location>
</feature>
<feature type="region of interest" description="Disordered" evidence="3">
    <location>
        <begin position="25"/>
        <end position="57"/>
    </location>
</feature>
<feature type="compositionally biased region" description="Polar residues" evidence="3">
    <location>
        <begin position="38"/>
        <end position="57"/>
    </location>
</feature>
<feature type="helix" evidence="9">
    <location>
        <begin position="8"/>
        <end position="11"/>
    </location>
</feature>
<feature type="helix" evidence="9">
    <location>
        <begin position="16"/>
        <end position="21"/>
    </location>
</feature>
<feature type="helix" evidence="9">
    <location>
        <begin position="63"/>
        <end position="75"/>
    </location>
</feature>
<feature type="turn" evidence="9">
    <location>
        <begin position="76"/>
        <end position="83"/>
    </location>
</feature>
<feature type="helix" evidence="9">
    <location>
        <begin position="84"/>
        <end position="91"/>
    </location>
</feature>
<feature type="helix" evidence="9">
    <location>
        <begin position="100"/>
        <end position="115"/>
    </location>
</feature>
<feature type="helix" evidence="9">
    <location>
        <begin position="137"/>
        <end position="162"/>
    </location>
</feature>
<feature type="strand" evidence="10">
    <location>
        <begin position="164"/>
        <end position="166"/>
    </location>
</feature>
<feature type="turn" evidence="9">
    <location>
        <begin position="169"/>
        <end position="171"/>
    </location>
</feature>
<feature type="helix" evidence="10">
    <location>
        <begin position="173"/>
        <end position="175"/>
    </location>
</feature>
<feature type="strand" evidence="9">
    <location>
        <begin position="183"/>
        <end position="189"/>
    </location>
</feature>
<evidence type="ECO:0000250" key="1">
    <source>
        <dbReference type="UniProtKB" id="Q5J8M3"/>
    </source>
</evidence>
<evidence type="ECO:0000255" key="2"/>
<evidence type="ECO:0000256" key="3">
    <source>
        <dbReference type="SAM" id="MobiDB-lite"/>
    </source>
</evidence>
<evidence type="ECO:0000269" key="4">
    <source>
    </source>
</evidence>
<evidence type="ECO:0000269" key="5">
    <source>
    </source>
</evidence>
<evidence type="ECO:0000269" key="6">
    <source>
    </source>
</evidence>
<evidence type="ECO:0000269" key="7">
    <source>
    </source>
</evidence>
<evidence type="ECO:0000305" key="8"/>
<evidence type="ECO:0007829" key="9">
    <source>
        <dbReference type="PDB" id="6WB9"/>
    </source>
</evidence>
<evidence type="ECO:0007829" key="10">
    <source>
        <dbReference type="PDB" id="7KRA"/>
    </source>
</evidence>